<protein>
    <recommendedName>
        <fullName evidence="1">Proline--tRNA ligase</fullName>
        <ecNumber evidence="1">6.1.1.15</ecNumber>
    </recommendedName>
    <alternativeName>
        <fullName evidence="1">Prolyl-tRNA synthetase</fullName>
        <shortName evidence="1">ProRS</shortName>
    </alternativeName>
</protein>
<sequence>MLTRMSQLFVRTLREDPADAEVPSHRWLVRAGYIRRVAPGVYSWLPLGLRVMRRIEAICREEMASIGAQEVSFPALLASDPYKETGRWVEYGDNLFRLKDRKGVDMLLGPTHEEMFTLMVKDLYSSYKDLPLCLYQIQNKYRDEARPRAGILRGREFVMMDAYSFDVAQEGLDEAYQAQRDAYIRIFNRLGFDYAIVKAMSGPMGGSRSEEFLAVAANGEDTFVRSSGGYAANVEAVRMAVPDPLPIDGLPEAEVVDTPDARTIESLVRIANEVRPRADRPWTGADTLKNVVFMVAHPDGTREPLAIGLPGDRDVDEKRLEAVLEPAVVEPFTEEDFAANPQLVKGYIGPGALGEDNSSKVRYLVDPRVVTGTSWITGADQKDRHVFNLVAGRDFTPDGVIDVAEIREGDPAPDGSGELHLARGIEIGHIFQLGKKYADALGLKVLDHNGKLVTVTMGSYGLGVSRAVAAIAEGTCDEKGLCWPREVAPYDVQVLATGKGTEILDEATRIASELAEAGLEVLLDDRKASPGVKFADSEILGMPTSVVVGRGLKDGLVEVRDRSTGENRQVSVAEAVCAVLKEVRG</sequence>
<gene>
    <name evidence="1" type="primary">proS</name>
    <name type="ordered locus">PPA1499</name>
</gene>
<comment type="function">
    <text evidence="1">Catalyzes the attachment of proline to tRNA(Pro) in a two-step reaction: proline is first activated by ATP to form Pro-AMP and then transferred to the acceptor end of tRNA(Pro). As ProRS can inadvertently accommodate and process non-cognate amino acids such as alanine and cysteine, to avoid such errors it has two additional distinct editing activities against alanine. One activity is designated as 'pretransfer' editing and involves the tRNA(Pro)-independent hydrolysis of activated Ala-AMP. The other activity is designated 'posttransfer' editing and involves deacylation of mischarged Ala-tRNA(Pro). The misacylated Cys-tRNA(Pro) is not edited by ProRS.</text>
</comment>
<comment type="catalytic activity">
    <reaction evidence="1">
        <text>tRNA(Pro) + L-proline + ATP = L-prolyl-tRNA(Pro) + AMP + diphosphate</text>
        <dbReference type="Rhea" id="RHEA:14305"/>
        <dbReference type="Rhea" id="RHEA-COMP:9700"/>
        <dbReference type="Rhea" id="RHEA-COMP:9702"/>
        <dbReference type="ChEBI" id="CHEBI:30616"/>
        <dbReference type="ChEBI" id="CHEBI:33019"/>
        <dbReference type="ChEBI" id="CHEBI:60039"/>
        <dbReference type="ChEBI" id="CHEBI:78442"/>
        <dbReference type="ChEBI" id="CHEBI:78532"/>
        <dbReference type="ChEBI" id="CHEBI:456215"/>
        <dbReference type="EC" id="6.1.1.15"/>
    </reaction>
</comment>
<comment type="subunit">
    <text evidence="1">Homodimer.</text>
</comment>
<comment type="subcellular location">
    <subcellularLocation>
        <location evidence="1">Cytoplasm</location>
    </subcellularLocation>
</comment>
<comment type="domain">
    <text evidence="1">Consists of three domains: the N-terminal catalytic domain, the editing domain and the C-terminal anticodon-binding domain.</text>
</comment>
<comment type="similarity">
    <text evidence="1">Belongs to the class-II aminoacyl-tRNA synthetase family. ProS type 1 subfamily.</text>
</comment>
<reference key="1">
    <citation type="journal article" date="2004" name="Science">
        <title>The complete genome sequence of Propionibacterium acnes, a commensal of human skin.</title>
        <authorList>
            <person name="Brueggemann H."/>
            <person name="Henne A."/>
            <person name="Hoster F."/>
            <person name="Liesegang H."/>
            <person name="Wiezer A."/>
            <person name="Strittmatter A."/>
            <person name="Hujer S."/>
            <person name="Duerre P."/>
            <person name="Gottschalk G."/>
        </authorList>
    </citation>
    <scope>NUCLEOTIDE SEQUENCE [LARGE SCALE GENOMIC DNA]</scope>
    <source>
        <strain>DSM 16379 / KPA171202</strain>
    </source>
</reference>
<name>SYP_CUTAK</name>
<proteinExistence type="inferred from homology"/>
<accession>Q6A7L9</accession>
<keyword id="KW-0030">Aminoacyl-tRNA synthetase</keyword>
<keyword id="KW-0067">ATP-binding</keyword>
<keyword id="KW-0963">Cytoplasm</keyword>
<keyword id="KW-0436">Ligase</keyword>
<keyword id="KW-0547">Nucleotide-binding</keyword>
<keyword id="KW-0648">Protein biosynthesis</keyword>
<evidence type="ECO:0000255" key="1">
    <source>
        <dbReference type="HAMAP-Rule" id="MF_01569"/>
    </source>
</evidence>
<feature type="chain" id="PRO_0000248742" description="Proline--tRNA ligase">
    <location>
        <begin position="1"/>
        <end position="585"/>
    </location>
</feature>
<organism>
    <name type="scientific">Cutibacterium acnes (strain DSM 16379 / KPA171202)</name>
    <name type="common">Propionibacterium acnes</name>
    <dbReference type="NCBI Taxonomy" id="267747"/>
    <lineage>
        <taxon>Bacteria</taxon>
        <taxon>Bacillati</taxon>
        <taxon>Actinomycetota</taxon>
        <taxon>Actinomycetes</taxon>
        <taxon>Propionibacteriales</taxon>
        <taxon>Propionibacteriaceae</taxon>
        <taxon>Cutibacterium</taxon>
    </lineage>
</organism>
<dbReference type="EC" id="6.1.1.15" evidence="1"/>
<dbReference type="EMBL" id="AE017283">
    <property type="protein sequence ID" value="AAT83246.1"/>
    <property type="molecule type" value="Genomic_DNA"/>
</dbReference>
<dbReference type="SMR" id="Q6A7L9"/>
<dbReference type="EnsemblBacteria" id="AAT83246">
    <property type="protein sequence ID" value="AAT83246"/>
    <property type="gene ID" value="PPA1499"/>
</dbReference>
<dbReference type="KEGG" id="pac:PPA1499"/>
<dbReference type="eggNOG" id="COG0442">
    <property type="taxonomic scope" value="Bacteria"/>
</dbReference>
<dbReference type="HOGENOM" id="CLU_016739_0_0_11"/>
<dbReference type="Proteomes" id="UP000000603">
    <property type="component" value="Chromosome"/>
</dbReference>
<dbReference type="GO" id="GO:0005829">
    <property type="term" value="C:cytosol"/>
    <property type="evidence" value="ECO:0007669"/>
    <property type="project" value="TreeGrafter"/>
</dbReference>
<dbReference type="GO" id="GO:0002161">
    <property type="term" value="F:aminoacyl-tRNA deacylase activity"/>
    <property type="evidence" value="ECO:0007669"/>
    <property type="project" value="InterPro"/>
</dbReference>
<dbReference type="GO" id="GO:0005524">
    <property type="term" value="F:ATP binding"/>
    <property type="evidence" value="ECO:0007669"/>
    <property type="project" value="UniProtKB-UniRule"/>
</dbReference>
<dbReference type="GO" id="GO:0004827">
    <property type="term" value="F:proline-tRNA ligase activity"/>
    <property type="evidence" value="ECO:0007669"/>
    <property type="project" value="UniProtKB-UniRule"/>
</dbReference>
<dbReference type="GO" id="GO:0006433">
    <property type="term" value="P:prolyl-tRNA aminoacylation"/>
    <property type="evidence" value="ECO:0007669"/>
    <property type="project" value="UniProtKB-UniRule"/>
</dbReference>
<dbReference type="CDD" id="cd00861">
    <property type="entry name" value="ProRS_anticodon_short"/>
    <property type="match status" value="1"/>
</dbReference>
<dbReference type="CDD" id="cd00779">
    <property type="entry name" value="ProRS_core_prok"/>
    <property type="match status" value="1"/>
</dbReference>
<dbReference type="FunFam" id="3.30.930.10:FF:000065">
    <property type="entry name" value="Proline--tRNA ligase"/>
    <property type="match status" value="1"/>
</dbReference>
<dbReference type="FunFam" id="3.30.930.10:FF:000066">
    <property type="entry name" value="Proline--tRNA ligase"/>
    <property type="match status" value="1"/>
</dbReference>
<dbReference type="Gene3D" id="3.40.50.800">
    <property type="entry name" value="Anticodon-binding domain"/>
    <property type="match status" value="1"/>
</dbReference>
<dbReference type="Gene3D" id="3.30.930.10">
    <property type="entry name" value="Bira Bifunctional Protein, Domain 2"/>
    <property type="match status" value="2"/>
</dbReference>
<dbReference type="Gene3D" id="3.90.960.10">
    <property type="entry name" value="YbaK/aminoacyl-tRNA synthetase-associated domain"/>
    <property type="match status" value="1"/>
</dbReference>
<dbReference type="HAMAP" id="MF_01569">
    <property type="entry name" value="Pro_tRNA_synth_type1"/>
    <property type="match status" value="1"/>
</dbReference>
<dbReference type="InterPro" id="IPR002314">
    <property type="entry name" value="aa-tRNA-synt_IIb"/>
</dbReference>
<dbReference type="InterPro" id="IPR006195">
    <property type="entry name" value="aa-tRNA-synth_II"/>
</dbReference>
<dbReference type="InterPro" id="IPR045864">
    <property type="entry name" value="aa-tRNA-synth_II/BPL/LPL"/>
</dbReference>
<dbReference type="InterPro" id="IPR004154">
    <property type="entry name" value="Anticodon-bd"/>
</dbReference>
<dbReference type="InterPro" id="IPR036621">
    <property type="entry name" value="Anticodon-bd_dom_sf"/>
</dbReference>
<dbReference type="InterPro" id="IPR002316">
    <property type="entry name" value="Pro-tRNA-ligase_IIa"/>
</dbReference>
<dbReference type="InterPro" id="IPR004500">
    <property type="entry name" value="Pro-tRNA-synth_IIa_bac-type"/>
</dbReference>
<dbReference type="InterPro" id="IPR023717">
    <property type="entry name" value="Pro-tRNA-Synthase_IIa_type1"/>
</dbReference>
<dbReference type="InterPro" id="IPR050062">
    <property type="entry name" value="Pro-tRNA_synthetase"/>
</dbReference>
<dbReference type="InterPro" id="IPR044140">
    <property type="entry name" value="ProRS_anticodon_short"/>
</dbReference>
<dbReference type="InterPro" id="IPR033730">
    <property type="entry name" value="ProRS_core_prok"/>
</dbReference>
<dbReference type="InterPro" id="IPR036754">
    <property type="entry name" value="YbaK/aa-tRNA-synt-asso_dom_sf"/>
</dbReference>
<dbReference type="InterPro" id="IPR007214">
    <property type="entry name" value="YbaK/aa-tRNA-synth-assoc-dom"/>
</dbReference>
<dbReference type="NCBIfam" id="NF006625">
    <property type="entry name" value="PRK09194.1"/>
    <property type="match status" value="1"/>
</dbReference>
<dbReference type="NCBIfam" id="TIGR00409">
    <property type="entry name" value="proS_fam_II"/>
    <property type="match status" value="1"/>
</dbReference>
<dbReference type="PANTHER" id="PTHR42753">
    <property type="entry name" value="MITOCHONDRIAL RIBOSOME PROTEIN L39/PROLYL-TRNA LIGASE FAMILY MEMBER"/>
    <property type="match status" value="1"/>
</dbReference>
<dbReference type="PANTHER" id="PTHR42753:SF2">
    <property type="entry name" value="PROLINE--TRNA LIGASE"/>
    <property type="match status" value="1"/>
</dbReference>
<dbReference type="Pfam" id="PF03129">
    <property type="entry name" value="HGTP_anticodon"/>
    <property type="match status" value="1"/>
</dbReference>
<dbReference type="Pfam" id="PF00587">
    <property type="entry name" value="tRNA-synt_2b"/>
    <property type="match status" value="1"/>
</dbReference>
<dbReference type="Pfam" id="PF04073">
    <property type="entry name" value="tRNA_edit"/>
    <property type="match status" value="1"/>
</dbReference>
<dbReference type="PRINTS" id="PR01046">
    <property type="entry name" value="TRNASYNTHPRO"/>
</dbReference>
<dbReference type="SUPFAM" id="SSF52954">
    <property type="entry name" value="Class II aaRS ABD-related"/>
    <property type="match status" value="1"/>
</dbReference>
<dbReference type="SUPFAM" id="SSF55681">
    <property type="entry name" value="Class II aaRS and biotin synthetases"/>
    <property type="match status" value="1"/>
</dbReference>
<dbReference type="SUPFAM" id="SSF55826">
    <property type="entry name" value="YbaK/ProRS associated domain"/>
    <property type="match status" value="1"/>
</dbReference>
<dbReference type="PROSITE" id="PS50862">
    <property type="entry name" value="AA_TRNA_LIGASE_II"/>
    <property type="match status" value="1"/>
</dbReference>